<gene>
    <name evidence="1" type="primary">ecfA1</name>
    <name type="synonym">cbiO1</name>
    <name type="ordered locus">MHJ_0255</name>
</gene>
<proteinExistence type="inferred from homology"/>
<evidence type="ECO:0000255" key="1">
    <source>
        <dbReference type="HAMAP-Rule" id="MF_01710"/>
    </source>
</evidence>
<sequence length="272" mass="30410">MIKVSDVCFSYTNNMDQLVLKNINVVFEKGKYYAILGHNGSGKSTFSKILSGIFKPQKGSIEVDGVLLNKENLTKIRKKIGIIFQNPDNQFVGATVEDDIAFSLENINEDPKKMSQIIANLAAKVQMESYLDREPQFLSGGQKQKVAIASVLALNPEIIIFDEITSMLDPRGKYDVVKILDDLRKDKTKTLISITHNMNEAILADEIIVFANGGIIAQGDPKLILNDKNIIEKAKIDSPFIYKISSALKLVSPTYDENELLEQLWKLKQKTS</sequence>
<keyword id="KW-0067">ATP-binding</keyword>
<keyword id="KW-1003">Cell membrane</keyword>
<keyword id="KW-0472">Membrane</keyword>
<keyword id="KW-0547">Nucleotide-binding</keyword>
<keyword id="KW-1278">Translocase</keyword>
<keyword id="KW-0813">Transport</keyword>
<comment type="function">
    <text evidence="1">ATP-binding (A) component of a common energy-coupling factor (ECF) ABC-transporter complex. Unlike classic ABC transporters this ECF transporter provides the energy necessary to transport a number of different substrates.</text>
</comment>
<comment type="subunit">
    <text evidence="1">Forms a stable energy-coupling factor (ECF) transporter complex composed of 2 membrane-embedded substrate-binding proteins (S component), 2 ATP-binding proteins (A component) and 2 transmembrane proteins (T component).</text>
</comment>
<comment type="subcellular location">
    <subcellularLocation>
        <location evidence="1">Cell membrane</location>
        <topology evidence="1">Peripheral membrane protein</topology>
    </subcellularLocation>
</comment>
<comment type="similarity">
    <text evidence="1">Belongs to the ABC transporter superfamily. Energy-coupling factor EcfA family.</text>
</comment>
<accession>Q4AA75</accession>
<organism>
    <name type="scientific">Mesomycoplasma hyopneumoniae (strain J / ATCC 25934 / NCTC 10110)</name>
    <name type="common">Mycoplasma hyopneumoniae</name>
    <dbReference type="NCBI Taxonomy" id="262719"/>
    <lineage>
        <taxon>Bacteria</taxon>
        <taxon>Bacillati</taxon>
        <taxon>Mycoplasmatota</taxon>
        <taxon>Mycoplasmoidales</taxon>
        <taxon>Metamycoplasmataceae</taxon>
        <taxon>Mesomycoplasma</taxon>
    </lineage>
</organism>
<dbReference type="EC" id="7.-.-.-" evidence="1"/>
<dbReference type="EMBL" id="AE017243">
    <property type="protein sequence ID" value="AAZ44346.1"/>
    <property type="molecule type" value="Genomic_DNA"/>
</dbReference>
<dbReference type="RefSeq" id="WP_011284036.1">
    <property type="nucleotide sequence ID" value="NC_007295.1"/>
</dbReference>
<dbReference type="SMR" id="Q4AA75"/>
<dbReference type="GeneID" id="41334561"/>
<dbReference type="KEGG" id="mhj:MHJ_0255"/>
<dbReference type="eggNOG" id="COG1122">
    <property type="taxonomic scope" value="Bacteria"/>
</dbReference>
<dbReference type="HOGENOM" id="CLU_000604_1_22_14"/>
<dbReference type="OrthoDB" id="9784332at2"/>
<dbReference type="Proteomes" id="UP000000548">
    <property type="component" value="Chromosome"/>
</dbReference>
<dbReference type="GO" id="GO:0043190">
    <property type="term" value="C:ATP-binding cassette (ABC) transporter complex"/>
    <property type="evidence" value="ECO:0007669"/>
    <property type="project" value="TreeGrafter"/>
</dbReference>
<dbReference type="GO" id="GO:0005524">
    <property type="term" value="F:ATP binding"/>
    <property type="evidence" value="ECO:0007669"/>
    <property type="project" value="UniProtKB-KW"/>
</dbReference>
<dbReference type="GO" id="GO:0016887">
    <property type="term" value="F:ATP hydrolysis activity"/>
    <property type="evidence" value="ECO:0007669"/>
    <property type="project" value="InterPro"/>
</dbReference>
<dbReference type="GO" id="GO:0042626">
    <property type="term" value="F:ATPase-coupled transmembrane transporter activity"/>
    <property type="evidence" value="ECO:0007669"/>
    <property type="project" value="TreeGrafter"/>
</dbReference>
<dbReference type="CDD" id="cd03225">
    <property type="entry name" value="ABC_cobalt_CbiO_domain1"/>
    <property type="match status" value="1"/>
</dbReference>
<dbReference type="FunFam" id="3.40.50.300:FF:000224">
    <property type="entry name" value="Energy-coupling factor transporter ATP-binding protein EcfA"/>
    <property type="match status" value="1"/>
</dbReference>
<dbReference type="Gene3D" id="3.40.50.300">
    <property type="entry name" value="P-loop containing nucleotide triphosphate hydrolases"/>
    <property type="match status" value="1"/>
</dbReference>
<dbReference type="InterPro" id="IPR003593">
    <property type="entry name" value="AAA+_ATPase"/>
</dbReference>
<dbReference type="InterPro" id="IPR003439">
    <property type="entry name" value="ABC_transporter-like_ATP-bd"/>
</dbReference>
<dbReference type="InterPro" id="IPR017871">
    <property type="entry name" value="ABC_transporter-like_CS"/>
</dbReference>
<dbReference type="InterPro" id="IPR015856">
    <property type="entry name" value="ABC_transpr_CbiO/EcfA_su"/>
</dbReference>
<dbReference type="InterPro" id="IPR050095">
    <property type="entry name" value="ECF_ABC_transporter_ATP-bd"/>
</dbReference>
<dbReference type="InterPro" id="IPR030947">
    <property type="entry name" value="EcfA_1"/>
</dbReference>
<dbReference type="InterPro" id="IPR027417">
    <property type="entry name" value="P-loop_NTPase"/>
</dbReference>
<dbReference type="NCBIfam" id="TIGR04520">
    <property type="entry name" value="ECF_ATPase_1"/>
    <property type="match status" value="1"/>
</dbReference>
<dbReference type="NCBIfam" id="NF010167">
    <property type="entry name" value="PRK13648.1"/>
    <property type="match status" value="1"/>
</dbReference>
<dbReference type="PANTHER" id="PTHR43553:SF24">
    <property type="entry name" value="ENERGY-COUPLING FACTOR TRANSPORTER ATP-BINDING PROTEIN ECFA1"/>
    <property type="match status" value="1"/>
</dbReference>
<dbReference type="PANTHER" id="PTHR43553">
    <property type="entry name" value="HEAVY METAL TRANSPORTER"/>
    <property type="match status" value="1"/>
</dbReference>
<dbReference type="Pfam" id="PF00005">
    <property type="entry name" value="ABC_tran"/>
    <property type="match status" value="1"/>
</dbReference>
<dbReference type="SMART" id="SM00382">
    <property type="entry name" value="AAA"/>
    <property type="match status" value="1"/>
</dbReference>
<dbReference type="SUPFAM" id="SSF52540">
    <property type="entry name" value="P-loop containing nucleoside triphosphate hydrolases"/>
    <property type="match status" value="1"/>
</dbReference>
<dbReference type="PROSITE" id="PS00211">
    <property type="entry name" value="ABC_TRANSPORTER_1"/>
    <property type="match status" value="1"/>
</dbReference>
<dbReference type="PROSITE" id="PS50893">
    <property type="entry name" value="ABC_TRANSPORTER_2"/>
    <property type="match status" value="1"/>
</dbReference>
<dbReference type="PROSITE" id="PS51246">
    <property type="entry name" value="CBIO"/>
    <property type="match status" value="1"/>
</dbReference>
<name>ECFA1_MESHJ</name>
<protein>
    <recommendedName>
        <fullName evidence="1">Energy-coupling factor transporter ATP-binding protein EcfA1</fullName>
        <shortName evidence="1">ECF transporter A component EcfA1</shortName>
        <ecNumber evidence="1">7.-.-.-</ecNumber>
    </recommendedName>
</protein>
<reference key="1">
    <citation type="journal article" date="2005" name="J. Bacteriol.">
        <title>Swine and poultry pathogens: the complete genome sequences of two strains of Mycoplasma hyopneumoniae and a strain of Mycoplasma synoviae.</title>
        <authorList>
            <person name="Vasconcelos A.T.R."/>
            <person name="Ferreira H.B."/>
            <person name="Bizarro C.V."/>
            <person name="Bonatto S.L."/>
            <person name="Carvalho M.O."/>
            <person name="Pinto P.M."/>
            <person name="Almeida D.F."/>
            <person name="Almeida L.G.P."/>
            <person name="Almeida R."/>
            <person name="Alves-Junior L."/>
            <person name="Assuncao E.N."/>
            <person name="Azevedo V.A.C."/>
            <person name="Bogo M.R."/>
            <person name="Brigido M.M."/>
            <person name="Brocchi M."/>
            <person name="Burity H.A."/>
            <person name="Camargo A.A."/>
            <person name="Camargo S.S."/>
            <person name="Carepo M.S."/>
            <person name="Carraro D.M."/>
            <person name="de Mattos Cascardo J.C."/>
            <person name="Castro L.A."/>
            <person name="Cavalcanti G."/>
            <person name="Chemale G."/>
            <person name="Collevatti R.G."/>
            <person name="Cunha C.W."/>
            <person name="Dallagiovanna B."/>
            <person name="Dambros B.P."/>
            <person name="Dellagostin O.A."/>
            <person name="Falcao C."/>
            <person name="Fantinatti-Garboggini F."/>
            <person name="Felipe M.S.S."/>
            <person name="Fiorentin L."/>
            <person name="Franco G.R."/>
            <person name="Freitas N.S.A."/>
            <person name="Frias D."/>
            <person name="Grangeiro T.B."/>
            <person name="Grisard E.C."/>
            <person name="Guimaraes C.T."/>
            <person name="Hungria M."/>
            <person name="Jardim S.N."/>
            <person name="Krieger M.A."/>
            <person name="Laurino J.P."/>
            <person name="Lima L.F.A."/>
            <person name="Lopes M.I."/>
            <person name="Loreto E.L.S."/>
            <person name="Madeira H.M.F."/>
            <person name="Manfio G.P."/>
            <person name="Maranhao A.Q."/>
            <person name="Martinkovics C.T."/>
            <person name="Medeiros S.R.B."/>
            <person name="Moreira M.A.M."/>
            <person name="Neiva M."/>
            <person name="Ramalho-Neto C.E."/>
            <person name="Nicolas M.F."/>
            <person name="Oliveira S.C."/>
            <person name="Paixao R.F.C."/>
            <person name="Pedrosa F.O."/>
            <person name="Pena S.D.J."/>
            <person name="Pereira M."/>
            <person name="Pereira-Ferrari L."/>
            <person name="Piffer I."/>
            <person name="Pinto L.S."/>
            <person name="Potrich D.P."/>
            <person name="Salim A.C.M."/>
            <person name="Santos F.R."/>
            <person name="Schmitt R."/>
            <person name="Schneider M.P.C."/>
            <person name="Schrank A."/>
            <person name="Schrank I.S."/>
            <person name="Schuck A.F."/>
            <person name="Seuanez H.N."/>
            <person name="Silva D.W."/>
            <person name="Silva R."/>
            <person name="Silva S.C."/>
            <person name="Soares C.M.A."/>
            <person name="Souza K.R.L."/>
            <person name="Souza R.C."/>
            <person name="Staats C.C."/>
            <person name="Steffens M.B.R."/>
            <person name="Teixeira S.M.R."/>
            <person name="Urmenyi T.P."/>
            <person name="Vainstein M.H."/>
            <person name="Zuccherato L.W."/>
            <person name="Simpson A.J.G."/>
            <person name="Zaha A."/>
        </authorList>
    </citation>
    <scope>NUCLEOTIDE SEQUENCE [LARGE SCALE GENOMIC DNA]</scope>
    <source>
        <strain>J / ATCC 25934 / NCTC 10110</strain>
    </source>
</reference>
<feature type="chain" id="PRO_0000287972" description="Energy-coupling factor transporter ATP-binding protein EcfA1">
    <location>
        <begin position="1"/>
        <end position="272"/>
    </location>
</feature>
<feature type="domain" description="ABC transporter" evidence="1">
    <location>
        <begin position="2"/>
        <end position="237"/>
    </location>
</feature>
<feature type="binding site" evidence="1">
    <location>
        <begin position="37"/>
        <end position="44"/>
    </location>
    <ligand>
        <name>ATP</name>
        <dbReference type="ChEBI" id="CHEBI:30616"/>
    </ligand>
</feature>